<keyword id="KW-0173">Coenzyme A biosynthesis</keyword>
<keyword id="KW-0963">Cytoplasm</keyword>
<keyword id="KW-0460">Magnesium</keyword>
<keyword id="KW-0479">Metal-binding</keyword>
<keyword id="KW-0808">Transferase</keyword>
<gene>
    <name evidence="1" type="primary">panB</name>
    <name type="ordered locus">M1627_0191</name>
</gene>
<accession>C3N136</accession>
<name>PANB_SACI3</name>
<feature type="chain" id="PRO_1000203477" description="3-methyl-2-oxobutanoate hydroxymethyltransferase">
    <location>
        <begin position="1"/>
        <end position="267"/>
    </location>
</feature>
<feature type="active site" description="Proton acceptor" evidence="1">
    <location>
        <position position="182"/>
    </location>
</feature>
<feature type="binding site" evidence="1">
    <location>
        <begin position="45"/>
        <end position="46"/>
    </location>
    <ligand>
        <name>3-methyl-2-oxobutanoate</name>
        <dbReference type="ChEBI" id="CHEBI:11851"/>
    </ligand>
</feature>
<feature type="binding site" evidence="1">
    <location>
        <position position="45"/>
    </location>
    <ligand>
        <name>Mg(2+)</name>
        <dbReference type="ChEBI" id="CHEBI:18420"/>
    </ligand>
</feature>
<feature type="binding site" evidence="1">
    <location>
        <position position="84"/>
    </location>
    <ligand>
        <name>3-methyl-2-oxobutanoate</name>
        <dbReference type="ChEBI" id="CHEBI:11851"/>
    </ligand>
</feature>
<feature type="binding site" evidence="1">
    <location>
        <position position="84"/>
    </location>
    <ligand>
        <name>Mg(2+)</name>
        <dbReference type="ChEBI" id="CHEBI:18420"/>
    </ligand>
</feature>
<feature type="binding site" evidence="1">
    <location>
        <position position="113"/>
    </location>
    <ligand>
        <name>3-methyl-2-oxobutanoate</name>
        <dbReference type="ChEBI" id="CHEBI:11851"/>
    </ligand>
</feature>
<feature type="binding site" evidence="1">
    <location>
        <position position="115"/>
    </location>
    <ligand>
        <name>Mg(2+)</name>
        <dbReference type="ChEBI" id="CHEBI:18420"/>
    </ligand>
</feature>
<sequence>MKKVTIRDFIKKKSTKEKITILTAYDYPTAKIISNTGLDSILVGDSLGMVVLGYANTLNVTMRDMISHTRAVARANPPQLIVADMPFLSYEIDTKSAVKNAGLLVKAGSDAIKLEGGEEMKDTVKAIVKAGIPVMGHIGLTPQRFLRLGGFRTIGKTKQEEDQLIKDSLELEDAGVFSLVIENTYVDIAKRITEKLNIPTICIGAGPYCDGQVLVINDLLGLSEFTPYFAKSYVNLKEIISNAINQYIIDVKNNKFPEKQHYKEKES</sequence>
<reference key="1">
    <citation type="journal article" date="2009" name="Proc. Natl. Acad. Sci. U.S.A.">
        <title>Biogeography of the Sulfolobus islandicus pan-genome.</title>
        <authorList>
            <person name="Reno M.L."/>
            <person name="Held N.L."/>
            <person name="Fields C.J."/>
            <person name="Burke P.V."/>
            <person name="Whitaker R.J."/>
        </authorList>
    </citation>
    <scope>NUCLEOTIDE SEQUENCE [LARGE SCALE GENOMIC DNA]</scope>
    <source>
        <strain>M.16.27</strain>
    </source>
</reference>
<organism>
    <name type="scientific">Saccharolobus islandicus (strain M.16.27)</name>
    <name type="common">Sulfolobus islandicus</name>
    <dbReference type="NCBI Taxonomy" id="427318"/>
    <lineage>
        <taxon>Archaea</taxon>
        <taxon>Thermoproteota</taxon>
        <taxon>Thermoprotei</taxon>
        <taxon>Sulfolobales</taxon>
        <taxon>Sulfolobaceae</taxon>
        <taxon>Saccharolobus</taxon>
    </lineage>
</organism>
<comment type="function">
    <text evidence="1">Catalyzes the reversible reaction in which hydroxymethyl group from 5,10-methylenetetrahydrofolate is transferred onto alpha-ketoisovalerate to form ketopantoate.</text>
</comment>
<comment type="catalytic activity">
    <reaction evidence="1">
        <text>3-methyl-2-oxobutanoate + (6R)-5,10-methylene-5,6,7,8-tetrahydrofolate + H2O = 2-dehydropantoate + (6S)-5,6,7,8-tetrahydrofolate</text>
        <dbReference type="Rhea" id="RHEA:11824"/>
        <dbReference type="ChEBI" id="CHEBI:11561"/>
        <dbReference type="ChEBI" id="CHEBI:11851"/>
        <dbReference type="ChEBI" id="CHEBI:15377"/>
        <dbReference type="ChEBI" id="CHEBI:15636"/>
        <dbReference type="ChEBI" id="CHEBI:57453"/>
        <dbReference type="EC" id="2.1.2.11"/>
    </reaction>
</comment>
<comment type="cofactor">
    <cofactor evidence="1">
        <name>Mg(2+)</name>
        <dbReference type="ChEBI" id="CHEBI:18420"/>
    </cofactor>
    <text evidence="1">Binds 1 Mg(2+) ion per subunit.</text>
</comment>
<comment type="pathway">
    <text evidence="1">Cofactor biosynthesis; coenzyme A biosynthesis.</text>
</comment>
<comment type="subunit">
    <text evidence="1">Homodecamer; pentamer of dimers.</text>
</comment>
<comment type="subcellular location">
    <subcellularLocation>
        <location evidence="1">Cytoplasm</location>
    </subcellularLocation>
</comment>
<comment type="similarity">
    <text evidence="1">Belongs to the PanB family.</text>
</comment>
<evidence type="ECO:0000255" key="1">
    <source>
        <dbReference type="HAMAP-Rule" id="MF_00156"/>
    </source>
</evidence>
<protein>
    <recommendedName>
        <fullName evidence="1">3-methyl-2-oxobutanoate hydroxymethyltransferase</fullName>
        <ecNumber evidence="1">2.1.2.11</ecNumber>
    </recommendedName>
    <alternativeName>
        <fullName evidence="1">Ketopantoate hydroxymethyltransferase</fullName>
        <shortName evidence="1">KPHMT</shortName>
    </alternativeName>
</protein>
<dbReference type="EC" id="2.1.2.11" evidence="1"/>
<dbReference type="EMBL" id="CP001401">
    <property type="protein sequence ID" value="ACP54221.1"/>
    <property type="molecule type" value="Genomic_DNA"/>
</dbReference>
<dbReference type="RefSeq" id="WP_012710369.1">
    <property type="nucleotide sequence ID" value="NC_012632.1"/>
</dbReference>
<dbReference type="SMR" id="C3N136"/>
<dbReference type="GeneID" id="84060682"/>
<dbReference type="KEGG" id="sim:M1627_0191"/>
<dbReference type="HOGENOM" id="CLU_036645_1_0_2"/>
<dbReference type="UniPathway" id="UPA00241"/>
<dbReference type="Proteomes" id="UP000002307">
    <property type="component" value="Chromosome"/>
</dbReference>
<dbReference type="GO" id="GO:0005737">
    <property type="term" value="C:cytoplasm"/>
    <property type="evidence" value="ECO:0007669"/>
    <property type="project" value="UniProtKB-SubCell"/>
</dbReference>
<dbReference type="GO" id="GO:0003864">
    <property type="term" value="F:3-methyl-2-oxobutanoate hydroxymethyltransferase activity"/>
    <property type="evidence" value="ECO:0007669"/>
    <property type="project" value="UniProtKB-UniRule"/>
</dbReference>
<dbReference type="GO" id="GO:0000287">
    <property type="term" value="F:magnesium ion binding"/>
    <property type="evidence" value="ECO:0007669"/>
    <property type="project" value="TreeGrafter"/>
</dbReference>
<dbReference type="GO" id="GO:0015937">
    <property type="term" value="P:coenzyme A biosynthetic process"/>
    <property type="evidence" value="ECO:0007669"/>
    <property type="project" value="UniProtKB-UniRule"/>
</dbReference>
<dbReference type="GO" id="GO:0015940">
    <property type="term" value="P:pantothenate biosynthetic process"/>
    <property type="evidence" value="ECO:0007669"/>
    <property type="project" value="InterPro"/>
</dbReference>
<dbReference type="CDD" id="cd06557">
    <property type="entry name" value="KPHMT-like"/>
    <property type="match status" value="1"/>
</dbReference>
<dbReference type="FunFam" id="3.20.20.60:FF:000052">
    <property type="entry name" value="3-methyl-2-oxobutanoate hydroxymethyltransferase"/>
    <property type="match status" value="1"/>
</dbReference>
<dbReference type="Gene3D" id="3.20.20.60">
    <property type="entry name" value="Phosphoenolpyruvate-binding domains"/>
    <property type="match status" value="1"/>
</dbReference>
<dbReference type="HAMAP" id="MF_00156">
    <property type="entry name" value="PanB"/>
    <property type="match status" value="1"/>
</dbReference>
<dbReference type="InterPro" id="IPR003700">
    <property type="entry name" value="Pantoate_hydroxy_MeTrfase"/>
</dbReference>
<dbReference type="InterPro" id="IPR015813">
    <property type="entry name" value="Pyrv/PenolPyrv_kinase-like_dom"/>
</dbReference>
<dbReference type="InterPro" id="IPR040442">
    <property type="entry name" value="Pyrv_kinase-like_dom_sf"/>
</dbReference>
<dbReference type="NCBIfam" id="TIGR00222">
    <property type="entry name" value="panB"/>
    <property type="match status" value="1"/>
</dbReference>
<dbReference type="NCBIfam" id="NF001452">
    <property type="entry name" value="PRK00311.1"/>
    <property type="match status" value="1"/>
</dbReference>
<dbReference type="PANTHER" id="PTHR20881">
    <property type="entry name" value="3-METHYL-2-OXOBUTANOATE HYDROXYMETHYLTRANSFERASE"/>
    <property type="match status" value="1"/>
</dbReference>
<dbReference type="PANTHER" id="PTHR20881:SF0">
    <property type="entry name" value="3-METHYL-2-OXOBUTANOATE HYDROXYMETHYLTRANSFERASE"/>
    <property type="match status" value="1"/>
</dbReference>
<dbReference type="Pfam" id="PF02548">
    <property type="entry name" value="Pantoate_transf"/>
    <property type="match status" value="1"/>
</dbReference>
<dbReference type="PIRSF" id="PIRSF000388">
    <property type="entry name" value="Pantoate_hydroxy_MeTrfase"/>
    <property type="match status" value="1"/>
</dbReference>
<dbReference type="SUPFAM" id="SSF51621">
    <property type="entry name" value="Phosphoenolpyruvate/pyruvate domain"/>
    <property type="match status" value="1"/>
</dbReference>
<proteinExistence type="inferred from homology"/>